<evidence type="ECO:0000255" key="1">
    <source>
        <dbReference type="PROSITE-ProRule" id="PRU00169"/>
    </source>
</evidence>
<evidence type="ECO:0000255" key="2">
    <source>
        <dbReference type="PROSITE-ProRule" id="PRU00308"/>
    </source>
</evidence>
<evidence type="ECO:0000269" key="3">
    <source>
    </source>
</evidence>
<evidence type="ECO:0000269" key="4">
    <source>
    </source>
</evidence>
<evidence type="ECO:0000269" key="5">
    <source>
    </source>
</evidence>
<evidence type="ECO:0000269" key="6">
    <source>
    </source>
</evidence>
<evidence type="ECO:0000269" key="7">
    <source>
    </source>
</evidence>
<evidence type="ECO:0000303" key="8">
    <source>
    </source>
</evidence>
<evidence type="ECO:0000305" key="9"/>
<evidence type="ECO:0000305" key="10">
    <source>
    </source>
</evidence>
<evidence type="ECO:0000305" key="11">
    <source>
    </source>
</evidence>
<evidence type="ECO:0007744" key="12">
    <source>
        <dbReference type="PDB" id="1S8N"/>
    </source>
</evidence>
<evidence type="ECO:0007744" key="13">
    <source>
        <dbReference type="PDB" id="1SD5"/>
    </source>
</evidence>
<evidence type="ECO:0007829" key="14">
    <source>
        <dbReference type="PDB" id="1S8N"/>
    </source>
</evidence>
<evidence type="ECO:0007829" key="15">
    <source>
        <dbReference type="PDB" id="1SD5"/>
    </source>
</evidence>
<organism>
    <name type="scientific">Mycobacterium tuberculosis (strain ATCC 25618 / H37Rv)</name>
    <dbReference type="NCBI Taxonomy" id="83332"/>
    <lineage>
        <taxon>Bacteria</taxon>
        <taxon>Bacillati</taxon>
        <taxon>Actinomycetota</taxon>
        <taxon>Actinomycetes</taxon>
        <taxon>Mycobacteriales</taxon>
        <taxon>Mycobacteriaceae</taxon>
        <taxon>Mycobacterium</taxon>
        <taxon>Mycobacterium tuberculosis complex</taxon>
    </lineage>
</organism>
<proteinExistence type="evidence at protein level"/>
<gene>
    <name evidence="8" type="primary">pdtaR</name>
    <name type="ordered locus">Rv1626</name>
</gene>
<feature type="initiator methionine" description="Removed" evidence="5">
    <location>
        <position position="1"/>
    </location>
</feature>
<feature type="chain" id="PRO_0000386597" description="Transcriptional regulatory protein PdtaR">
    <location>
        <begin position="2"/>
        <end position="205"/>
    </location>
</feature>
<feature type="domain" description="Response regulatory" evidence="1">
    <location>
        <begin position="15"/>
        <end position="129"/>
    </location>
</feature>
<feature type="domain" description="ANTAR" evidence="2">
    <location>
        <begin position="135"/>
        <end position="196"/>
    </location>
</feature>
<feature type="modified residue" description="N-acetylthreonine" evidence="5">
    <location>
        <position position="2"/>
    </location>
</feature>
<feature type="modified residue" description="4-aspartylphosphate" evidence="6">
    <location>
        <position position="65"/>
    </location>
</feature>
<feature type="strand" evidence="14">
    <location>
        <begin position="15"/>
        <end position="19"/>
    </location>
</feature>
<feature type="helix" evidence="14">
    <location>
        <begin position="23"/>
        <end position="35"/>
    </location>
</feature>
<feature type="strand" evidence="14">
    <location>
        <begin position="39"/>
        <end position="46"/>
    </location>
</feature>
<feature type="helix" evidence="14">
    <location>
        <begin position="47"/>
        <end position="57"/>
    </location>
</feature>
<feature type="strand" evidence="14">
    <location>
        <begin position="60"/>
        <end position="67"/>
    </location>
</feature>
<feature type="strand" evidence="14">
    <location>
        <begin position="69"/>
        <end position="71"/>
    </location>
</feature>
<feature type="helix" evidence="14">
    <location>
        <begin position="73"/>
        <end position="82"/>
    </location>
</feature>
<feature type="strand" evidence="14">
    <location>
        <begin position="88"/>
        <end position="93"/>
    </location>
</feature>
<feature type="helix" evidence="14">
    <location>
        <begin position="94"/>
        <end position="96"/>
    </location>
</feature>
<feature type="helix" evidence="14">
    <location>
        <begin position="97"/>
        <end position="101"/>
    </location>
</feature>
<feature type="helix" evidence="14">
    <location>
        <begin position="104"/>
        <end position="106"/>
    </location>
</feature>
<feature type="strand" evidence="14">
    <location>
        <begin position="109"/>
        <end position="115"/>
    </location>
</feature>
<feature type="helix" evidence="14">
    <location>
        <begin position="118"/>
        <end position="141"/>
    </location>
</feature>
<feature type="strand" evidence="15">
    <location>
        <begin position="142"/>
        <end position="144"/>
    </location>
</feature>
<feature type="helix" evidence="14">
    <location>
        <begin position="145"/>
        <end position="166"/>
    </location>
</feature>
<feature type="helix" evidence="14">
    <location>
        <begin position="170"/>
        <end position="183"/>
    </location>
</feature>
<feature type="helix" evidence="14">
    <location>
        <begin position="188"/>
        <end position="199"/>
    </location>
</feature>
<comment type="function">
    <text evidence="3 4 6 7">Member of the two-component regulatory system PdtaR/PdtaS (PubMed:16026786, PubMed:33772870, PubMed:34003742). This two-component system plays an essential role in mycobacterial adaptation to poor nutrient conditions (PubMed:33772870). PdtaR probably acts at the level of transcriptional antitermination rather than transcriptional initiation (PubMed:15341725).</text>
</comment>
<comment type="function">
    <text evidence="7">In addition, the PdtaR/PdtaS two-component system controls copper and nitric oxide (NO) resistance downstream of the intramembrane protease Rip1 (PubMed:34003742). This coupled Rip1/PdtaS/PdtaR circuit controls NO resistance and acute lung infection in mice by relieving PdtaR/PdtaS-mediated repression of isonitrile chalkophore biosynthesis (PubMed:34003742). Two signals are required to fully inactivate the PdtaR/PdtaS system and mediate NO resistance: a cytoplasmic inhibitory signal through the PdtaS kinase mediated by direct sensing of NO and the production of PPE1-5', an NO-induced small RNA, to sequester PdtaR (PubMed:34003742).</text>
</comment>
<comment type="activity regulation">
    <text evidence="7">The NO arm of the pathway is further controlled by sequestration of PdtaR by PPE1-5', controlled by the Rip1 intramembrane protease (PubMed:34003742). PPE1-5' directly inhibits PdtaR and derepresses PdtaR targets, which are usually repressed by the PdtaR/PdtaS cascade (PubMed:34003742).</text>
</comment>
<comment type="subunit">
    <text evidence="3 10">Monomer (PubMed:15341725). Dimer; when bound to its cognate DNA (Probable).</text>
</comment>
<comment type="subcellular location">
    <subcellularLocation>
        <location evidence="11">Cytoplasm</location>
    </subcellularLocation>
</comment>
<comment type="domain">
    <text evidence="3">Contains a C-terminal ANTAR domain, which is a RNA binding domain.</text>
</comment>
<comment type="PTM">
    <text evidence="4 6 7">Phosphorylated and activated by PdtaS.</text>
</comment>
<reference key="1">
    <citation type="journal article" date="1998" name="Nature">
        <title>Deciphering the biology of Mycobacterium tuberculosis from the complete genome sequence.</title>
        <authorList>
            <person name="Cole S.T."/>
            <person name="Brosch R."/>
            <person name="Parkhill J."/>
            <person name="Garnier T."/>
            <person name="Churcher C.M."/>
            <person name="Harris D.E."/>
            <person name="Gordon S.V."/>
            <person name="Eiglmeier K."/>
            <person name="Gas S."/>
            <person name="Barry C.E. III"/>
            <person name="Tekaia F."/>
            <person name="Badcock K."/>
            <person name="Basham D."/>
            <person name="Brown D."/>
            <person name="Chillingworth T."/>
            <person name="Connor R."/>
            <person name="Davies R.M."/>
            <person name="Devlin K."/>
            <person name="Feltwell T."/>
            <person name="Gentles S."/>
            <person name="Hamlin N."/>
            <person name="Holroyd S."/>
            <person name="Hornsby T."/>
            <person name="Jagels K."/>
            <person name="Krogh A."/>
            <person name="McLean J."/>
            <person name="Moule S."/>
            <person name="Murphy L.D."/>
            <person name="Oliver S."/>
            <person name="Osborne J."/>
            <person name="Quail M.A."/>
            <person name="Rajandream M.A."/>
            <person name="Rogers J."/>
            <person name="Rutter S."/>
            <person name="Seeger K."/>
            <person name="Skelton S."/>
            <person name="Squares S."/>
            <person name="Squares R."/>
            <person name="Sulston J.E."/>
            <person name="Taylor K."/>
            <person name="Whitehead S."/>
            <person name="Barrell B.G."/>
        </authorList>
    </citation>
    <scope>NUCLEOTIDE SEQUENCE [LARGE SCALE GENOMIC DNA]</scope>
    <source>
        <strain>ATCC 25618 / H37Rv</strain>
    </source>
</reference>
<reference key="2">
    <citation type="journal article" date="2005" name="FEBS Lett.">
        <title>A novel two-component system found in Mycobacterium tuberculosis.</title>
        <authorList>
            <person name="Morth J.P."/>
            <person name="Gosmann S."/>
            <person name="Nowak E."/>
            <person name="Tucker P.A."/>
        </authorList>
    </citation>
    <scope>FUNCTION</scope>
    <scope>PHOSPHORYLATION</scope>
    <source>
        <strain>ATCC 25618 / H37Rv</strain>
    </source>
</reference>
<reference key="3">
    <citation type="journal article" date="2011" name="Mol. Cell. Proteomics">
        <title>Proteogenomic analysis of Mycobacterium tuberculosis by high resolution mass spectrometry.</title>
        <authorList>
            <person name="Kelkar D.S."/>
            <person name="Kumar D."/>
            <person name="Kumar P."/>
            <person name="Balakrishnan L."/>
            <person name="Muthusamy B."/>
            <person name="Yadav A.K."/>
            <person name="Shrivastava P."/>
            <person name="Marimuthu A."/>
            <person name="Anand S."/>
            <person name="Sundaram H."/>
            <person name="Kingsbury R."/>
            <person name="Harsha H.C."/>
            <person name="Nair B."/>
            <person name="Prasad T.S."/>
            <person name="Chauhan D.S."/>
            <person name="Katoch K."/>
            <person name="Katoch V.M."/>
            <person name="Kumar P."/>
            <person name="Chaerkady R."/>
            <person name="Ramachandran S."/>
            <person name="Dash D."/>
            <person name="Pandey A."/>
        </authorList>
    </citation>
    <scope>ACETYLATION [LARGE SCALE ANALYSIS] AT THR-2</scope>
    <scope>CLEAVAGE OF INITIATOR METHIONINE [LARGE SCALE ANALYSIS]</scope>
    <scope>IDENTIFICATION BY MASS SPECTROMETRY [LARGE SCALE ANALYSIS]</scope>
    <source>
        <strain>ATCC 25618 / H37Rv</strain>
    </source>
</reference>
<reference key="4">
    <citation type="journal article" date="2021" name="FASEB J.">
        <title>Cyclic di-GMP sensing histidine kinase PdtaS controls mycobacterial adaptation to carbon sources.</title>
        <authorList>
            <person name="Hariharan V.N."/>
            <person name="Yadav R."/>
            <person name="Thakur C."/>
            <person name="Singh A."/>
            <person name="Gopinathan R."/>
            <person name="Singh D.P."/>
            <person name="Sankhe G."/>
            <person name="Malhotra V."/>
            <person name="Chandra N."/>
            <person name="Bhatt A."/>
            <person name="Saini D.K."/>
        </authorList>
    </citation>
    <scope>FUNCTION</scope>
    <scope>PHOSPHORYLATION AT ASP-65</scope>
    <source>
        <strain>H37Rv</strain>
    </source>
</reference>
<reference key="5">
    <citation type="journal article" date="2021" name="Elife">
        <title>Integrated sensing of host stresses by inhibition of a cytoplasmic two-component system controls M. tuberculosis acute lung infection.</title>
        <authorList>
            <person name="Buglino J.A."/>
            <person name="Sankhe G.D."/>
            <person name="Lazar N."/>
            <person name="Bean J.M."/>
            <person name="Glickman M.S."/>
        </authorList>
    </citation>
    <scope>FUNCTION IN COPPER AND NO RESISTANCE</scope>
    <scope>ACTIVITY REGULATION</scope>
    <scope>PHOSPHORYLATION</scope>
    <source>
        <strain>Erdman</strain>
    </source>
</reference>
<reference evidence="12 13" key="6">
    <citation type="journal article" date="2004" name="Structure">
        <title>The crystal and solution structure of a putative transcriptional antiterminator from Mycobacterium tuberculosis.</title>
        <authorList>
            <person name="Morth J.P."/>
            <person name="Feng V."/>
            <person name="Perry L.J."/>
            <person name="Svergun D.I."/>
            <person name="Tucker P.A."/>
        </authorList>
    </citation>
    <scope>X-RAY CRYSTALLOGRAPHY (1.48 ANGSTROMS)</scope>
    <scope>FUNCTION</scope>
    <scope>SUBUNIT</scope>
    <scope>DOMAIN</scope>
    <source>
        <strain>ATCC 25618 / H37Rv</strain>
    </source>
</reference>
<accession>P9WGM3</accession>
<accession>L0T8T8</accession>
<accession>O06143</accession>
<accession>Q7D890</accession>
<keyword id="KW-0002">3D-structure</keyword>
<keyword id="KW-0007">Acetylation</keyword>
<keyword id="KW-0963">Cytoplasm</keyword>
<keyword id="KW-0597">Phosphoprotein</keyword>
<keyword id="KW-1185">Reference proteome</keyword>
<keyword id="KW-0346">Stress response</keyword>
<keyword id="KW-0804">Transcription</keyword>
<keyword id="KW-0889">Transcription antitermination</keyword>
<keyword id="KW-0805">Transcription regulation</keyword>
<keyword id="KW-0902">Two-component regulatory system</keyword>
<sequence>MTGPTTDADAAVPRRVLIAEDEALIRMDLAEMLREEGYEIVGEAGDGQEAVELAELHKPDLVIMDVKMPRRDGIDAASEIASKRIAPIVVLTAFSQRDLVERARDAGAMAYLVKPFSISDLIPAIELAVSRFREITALEGEVATLSERLETRKLVERAKGLLQTKHGMTEPDAFKWIQRAAMDRRTTMKRVAEVVLETLGTPKDT</sequence>
<dbReference type="EMBL" id="AL123456">
    <property type="protein sequence ID" value="CCP44390.1"/>
    <property type="molecule type" value="Genomic_DNA"/>
</dbReference>
<dbReference type="PIR" id="H70558">
    <property type="entry name" value="H70558"/>
</dbReference>
<dbReference type="RefSeq" id="NP_216142.1">
    <property type="nucleotide sequence ID" value="NC_000962.3"/>
</dbReference>
<dbReference type="RefSeq" id="WP_003408045.1">
    <property type="nucleotide sequence ID" value="NZ_NVQJ01000016.1"/>
</dbReference>
<dbReference type="PDB" id="1S8N">
    <property type="method" value="X-ray"/>
    <property type="resolution" value="1.48 A"/>
    <property type="chains" value="A=1-205"/>
</dbReference>
<dbReference type="PDB" id="1SD5">
    <property type="method" value="X-ray"/>
    <property type="resolution" value="1.68 A"/>
    <property type="chains" value="A=1-205"/>
</dbReference>
<dbReference type="PDBsum" id="1S8N"/>
<dbReference type="PDBsum" id="1SD5"/>
<dbReference type="SMR" id="P9WGM3"/>
<dbReference type="FunCoup" id="P9WGM3">
    <property type="interactions" value="10"/>
</dbReference>
<dbReference type="STRING" id="83332.Rv1626"/>
<dbReference type="iPTMnet" id="P9WGM3"/>
<dbReference type="PaxDb" id="83332-Rv1626"/>
<dbReference type="DNASU" id="885080"/>
<dbReference type="GeneID" id="885080"/>
<dbReference type="KEGG" id="mtu:Rv1626"/>
<dbReference type="KEGG" id="mtv:RVBD_1626"/>
<dbReference type="TubercuList" id="Rv1626"/>
<dbReference type="eggNOG" id="COG3707">
    <property type="taxonomic scope" value="Bacteria"/>
</dbReference>
<dbReference type="InParanoid" id="P9WGM3"/>
<dbReference type="OrthoDB" id="9808843at2"/>
<dbReference type="PhylomeDB" id="P9WGM3"/>
<dbReference type="EvolutionaryTrace" id="P9WGM3"/>
<dbReference type="Proteomes" id="UP000001584">
    <property type="component" value="Chromosome"/>
</dbReference>
<dbReference type="GO" id="GO:0005737">
    <property type="term" value="C:cytoplasm"/>
    <property type="evidence" value="ECO:0007669"/>
    <property type="project" value="UniProtKB-SubCell"/>
</dbReference>
<dbReference type="GO" id="GO:0009274">
    <property type="term" value="C:peptidoglycan-based cell wall"/>
    <property type="evidence" value="ECO:0007005"/>
    <property type="project" value="MTBBASE"/>
</dbReference>
<dbReference type="GO" id="GO:0005886">
    <property type="term" value="C:plasma membrane"/>
    <property type="evidence" value="ECO:0007005"/>
    <property type="project" value="MTBBASE"/>
</dbReference>
<dbReference type="GO" id="GO:0043168">
    <property type="term" value="F:anion binding"/>
    <property type="evidence" value="ECO:0000314"/>
    <property type="project" value="CAFA"/>
</dbReference>
<dbReference type="GO" id="GO:0003723">
    <property type="term" value="F:RNA binding"/>
    <property type="evidence" value="ECO:0007669"/>
    <property type="project" value="InterPro"/>
</dbReference>
<dbReference type="GO" id="GO:0000160">
    <property type="term" value="P:phosphorelay signal transduction system"/>
    <property type="evidence" value="ECO:0000314"/>
    <property type="project" value="MTBBASE"/>
</dbReference>
<dbReference type="GO" id="GO:0031564">
    <property type="term" value="P:transcription antitermination"/>
    <property type="evidence" value="ECO:0007669"/>
    <property type="project" value="UniProtKB-KW"/>
</dbReference>
<dbReference type="CDD" id="cd19932">
    <property type="entry name" value="REC_PdtaR-like"/>
    <property type="match status" value="1"/>
</dbReference>
<dbReference type="FunFam" id="1.10.10.10:FF:000157">
    <property type="entry name" value="Response regulator receiver"/>
    <property type="match status" value="1"/>
</dbReference>
<dbReference type="FunFam" id="3.40.50.2300:FF:000050">
    <property type="entry name" value="Response regulator receiver"/>
    <property type="match status" value="1"/>
</dbReference>
<dbReference type="Gene3D" id="3.40.50.2300">
    <property type="match status" value="1"/>
</dbReference>
<dbReference type="Gene3D" id="1.10.10.10">
    <property type="entry name" value="Winged helix-like DNA-binding domain superfamily/Winged helix DNA-binding domain"/>
    <property type="match status" value="1"/>
</dbReference>
<dbReference type="InterPro" id="IPR005561">
    <property type="entry name" value="ANTAR"/>
</dbReference>
<dbReference type="InterPro" id="IPR011006">
    <property type="entry name" value="CheY-like_superfamily"/>
</dbReference>
<dbReference type="InterPro" id="IPR048029">
    <property type="entry name" value="PdtaR_REC"/>
</dbReference>
<dbReference type="InterPro" id="IPR008327">
    <property type="entry name" value="Sig_transdc_resp-reg_antiterm"/>
</dbReference>
<dbReference type="InterPro" id="IPR001789">
    <property type="entry name" value="Sig_transdc_resp-reg_receiver"/>
</dbReference>
<dbReference type="InterPro" id="IPR036388">
    <property type="entry name" value="WH-like_DNA-bd_sf"/>
</dbReference>
<dbReference type="PANTHER" id="PTHR43367">
    <property type="match status" value="1"/>
</dbReference>
<dbReference type="PANTHER" id="PTHR43367:SF1">
    <property type="entry name" value="TWO-COMPONENT RESPONSE REGULATOR-LIKE APRR6-RELATED"/>
    <property type="match status" value="1"/>
</dbReference>
<dbReference type="Pfam" id="PF03861">
    <property type="entry name" value="ANTAR"/>
    <property type="match status" value="1"/>
</dbReference>
<dbReference type="Pfam" id="PF00072">
    <property type="entry name" value="Response_reg"/>
    <property type="match status" value="1"/>
</dbReference>
<dbReference type="PIRSF" id="PIRSF036382">
    <property type="entry name" value="RR_antiterm"/>
    <property type="match status" value="1"/>
</dbReference>
<dbReference type="SMART" id="SM01012">
    <property type="entry name" value="ANTAR"/>
    <property type="match status" value="1"/>
</dbReference>
<dbReference type="SMART" id="SM00448">
    <property type="entry name" value="REC"/>
    <property type="match status" value="1"/>
</dbReference>
<dbReference type="SUPFAM" id="SSF52172">
    <property type="entry name" value="CheY-like"/>
    <property type="match status" value="1"/>
</dbReference>
<dbReference type="PROSITE" id="PS50921">
    <property type="entry name" value="ANTAR"/>
    <property type="match status" value="1"/>
</dbReference>
<dbReference type="PROSITE" id="PS50110">
    <property type="entry name" value="RESPONSE_REGULATORY"/>
    <property type="match status" value="1"/>
</dbReference>
<name>PDTAR_MYCTU</name>
<protein>
    <recommendedName>
        <fullName evidence="9">Transcriptional regulatory protein PdtaR</fullName>
    </recommendedName>
</protein>